<accession>Q00914</accession>
<accession>B7U1K7</accession>
<protein>
    <recommendedName>
        <fullName evidence="2">Photosystem I iron-sulfur center</fullName>
        <ecNumber evidence="2">1.97.1.12</ecNumber>
    </recommendedName>
    <alternativeName>
        <fullName evidence="2">9 kDa polypeptide</fullName>
    </alternativeName>
    <alternativeName>
        <fullName evidence="2">PSI-C</fullName>
    </alternativeName>
    <alternativeName>
        <fullName evidence="2">Photosystem I subunit VII</fullName>
    </alternativeName>
    <alternativeName>
        <fullName evidence="2">PsaC</fullName>
    </alternativeName>
</protein>
<feature type="initiator methionine" description="Removed" evidence="1">
    <location>
        <position position="1"/>
    </location>
</feature>
<feature type="chain" id="PRO_0000061974" description="Photosystem I iron-sulfur center">
    <location>
        <begin position="2"/>
        <end position="81"/>
    </location>
</feature>
<feature type="domain" description="4Fe-4S ferredoxin-type 1" evidence="2">
    <location>
        <begin position="2"/>
        <end position="31"/>
    </location>
</feature>
<feature type="domain" description="4Fe-4S ferredoxin-type 2" evidence="2">
    <location>
        <begin position="39"/>
        <end position="68"/>
    </location>
</feature>
<feature type="binding site">
    <location>
        <position position="11"/>
    </location>
    <ligand>
        <name>[4Fe-4S] cluster</name>
        <dbReference type="ChEBI" id="CHEBI:49883"/>
        <label>1</label>
    </ligand>
</feature>
<feature type="binding site">
    <location>
        <position position="14"/>
    </location>
    <ligand>
        <name>[4Fe-4S] cluster</name>
        <dbReference type="ChEBI" id="CHEBI:49883"/>
        <label>1</label>
    </ligand>
</feature>
<feature type="binding site">
    <location>
        <position position="17"/>
    </location>
    <ligand>
        <name>[4Fe-4S] cluster</name>
        <dbReference type="ChEBI" id="CHEBI:49883"/>
        <label>1</label>
    </ligand>
</feature>
<feature type="binding site">
    <location>
        <position position="21"/>
    </location>
    <ligand>
        <name>[4Fe-4S] cluster</name>
        <dbReference type="ChEBI" id="CHEBI:49883"/>
        <label>2</label>
    </ligand>
</feature>
<feature type="binding site">
    <location>
        <position position="48"/>
    </location>
    <ligand>
        <name>[4Fe-4S] cluster</name>
        <dbReference type="ChEBI" id="CHEBI:49883"/>
        <label>2</label>
    </ligand>
</feature>
<feature type="binding site">
    <location>
        <position position="51"/>
    </location>
    <ligand>
        <name>[4Fe-4S] cluster</name>
        <dbReference type="ChEBI" id="CHEBI:49883"/>
        <label>2</label>
    </ligand>
</feature>
<feature type="binding site">
    <location>
        <position position="54"/>
    </location>
    <ligand>
        <name>[4Fe-4S] cluster</name>
        <dbReference type="ChEBI" id="CHEBI:49883"/>
        <label>2</label>
    </ligand>
</feature>
<feature type="binding site">
    <location>
        <position position="58"/>
    </location>
    <ligand>
        <name>[4Fe-4S] cluster</name>
        <dbReference type="ChEBI" id="CHEBI:49883"/>
        <label>1</label>
    </ligand>
</feature>
<feature type="mutagenesis site" description="No effect." evidence="3">
    <original>D</original>
    <variation>K</variation>
    <variation>N</variation>
    <location>
        <position position="9"/>
    </location>
</feature>
<feature type="mutagenesis site" description="60-fold increase in affinity of PSI for ferredoxin; when associated with 15-KR-16. Unable to grow photoautotrophically." evidence="3">
    <original>I</original>
    <variation>V</variation>
    <location>
        <position position="12"/>
    </location>
</feature>
<feature type="mutagenesis site" description="60-fold increase in affinity of PSI for ferredoxin; when associated with V-12. Unable to grow photoautotrophically." evidence="3">
    <original>TQ</original>
    <variation>KR</variation>
    <location>
        <begin position="15"/>
        <end position="16"/>
    </location>
</feature>
<feature type="mutagenesis site" description="Drastically decreases affinity of PSI for ferredoxin, limits photoautotrophic growth at medium and greater light. Decreases cross-linking of ferredoxin to PSI-D and PSI-E." evidence="6">
    <original>K</original>
    <variation>D</variation>
    <variation>E</variation>
    <location>
        <position position="35"/>
    </location>
</feature>
<feature type="mutagenesis site" description="Drastically decreases affinity of PSI for ferredoxin. Decreases cross-linking of ferredoxin to PSI-D and PSI-E." evidence="6">
    <original>K</original>
    <variation>T</variation>
    <location>
        <position position="35"/>
    </location>
</feature>
<feature type="mutagenesis site" description="No effect." evidence="3">
    <original>E</original>
    <variation>K</variation>
    <variation>Q</variation>
    <location>
        <position position="46"/>
    </location>
</feature>
<feature type="mutagenesis site" description="Leads to partial destabilization of PSI; when associated with 52-TQ-53, alters the FA center. Unable to grow photoautotrophically." evidence="3">
    <original>V</original>
    <variation>I</variation>
    <location>
        <position position="49"/>
    </location>
</feature>
<feature type="mutagenesis site" description="Preferentially reduces FB, accumulates 20-30% PSI, 25% of which is damaged. Grows photoautotrophically under low light." evidence="3 5">
    <original>KR</original>
    <variation>SA</variation>
    <location>
        <begin position="52"/>
        <end position="53"/>
    </location>
</feature>
<feature type="mutagenesis site" description="Leads to partial destabilization of PSI; when associated with I-49. Alters the FA center. Unable to grow photoautotrophically." evidence="3 5">
    <original>KR</original>
    <variation>TQ</variation>
    <location>
        <begin position="52"/>
        <end position="53"/>
    </location>
</feature>
<feature type="strand" evidence="8">
    <location>
        <begin position="4"/>
        <end position="8"/>
    </location>
</feature>
<feature type="helix" evidence="8">
    <location>
        <begin position="16"/>
        <end position="20"/>
    </location>
</feature>
<feature type="strand" evidence="7">
    <location>
        <begin position="22"/>
        <end position="24"/>
    </location>
</feature>
<feature type="strand" evidence="8">
    <location>
        <begin position="27"/>
        <end position="30"/>
    </location>
</feature>
<feature type="strand" evidence="8">
    <location>
        <begin position="32"/>
        <end position="34"/>
    </location>
</feature>
<feature type="strand" evidence="8">
    <location>
        <begin position="37"/>
        <end position="41"/>
    </location>
</feature>
<feature type="helix" evidence="8">
    <location>
        <begin position="45"/>
        <end position="47"/>
    </location>
</feature>
<feature type="helix" evidence="8">
    <location>
        <begin position="53"/>
        <end position="57"/>
    </location>
</feature>
<feature type="strand" evidence="8">
    <location>
        <begin position="60"/>
        <end position="62"/>
    </location>
</feature>
<feature type="strand" evidence="8">
    <location>
        <begin position="64"/>
        <end position="68"/>
    </location>
</feature>
<feature type="turn" evidence="8">
    <location>
        <begin position="74"/>
        <end position="78"/>
    </location>
</feature>
<sequence>MAHIVKIYDTCIGCTQCVRACPLDVLEMVPWDGCKASQMASAPRTEDCVGCKRCETACPTDFLSVRVYLGSESTRSMGLSY</sequence>
<keyword id="KW-0002">3D-structure</keyword>
<keyword id="KW-0004">4Fe-4S</keyword>
<keyword id="KW-0150">Chloroplast</keyword>
<keyword id="KW-0249">Electron transport</keyword>
<keyword id="KW-0408">Iron</keyword>
<keyword id="KW-0411">Iron-sulfur</keyword>
<keyword id="KW-0472">Membrane</keyword>
<keyword id="KW-0479">Metal-binding</keyword>
<keyword id="KW-0560">Oxidoreductase</keyword>
<keyword id="KW-0602">Photosynthesis</keyword>
<keyword id="KW-0603">Photosystem I</keyword>
<keyword id="KW-0934">Plastid</keyword>
<keyword id="KW-1185">Reference proteome</keyword>
<keyword id="KW-0677">Repeat</keyword>
<keyword id="KW-0793">Thylakoid</keyword>
<keyword id="KW-0813">Transport</keyword>
<dbReference type="EC" id="1.97.1.12" evidence="2"/>
<dbReference type="EMBL" id="X60365">
    <property type="protein sequence ID" value="CAA42917.1"/>
    <property type="molecule type" value="Genomic_DNA"/>
</dbReference>
<dbReference type="EMBL" id="U43964">
    <property type="protein sequence ID" value="AAB17714.1"/>
    <property type="molecule type" value="Genomic_DNA"/>
</dbReference>
<dbReference type="EMBL" id="FJ423446">
    <property type="protein sequence ID" value="ACJ50154.1"/>
    <property type="molecule type" value="Genomic_DNA"/>
</dbReference>
<dbReference type="EMBL" id="BK000554">
    <property type="protein sequence ID" value="DAA00967.1"/>
    <property type="molecule type" value="Genomic_DNA"/>
</dbReference>
<dbReference type="PIR" id="S16351">
    <property type="entry name" value="S16351"/>
</dbReference>
<dbReference type="RefSeq" id="NP_958423.1">
    <property type="nucleotide sequence ID" value="NC_005353.1"/>
</dbReference>
<dbReference type="PDB" id="6IJJ">
    <property type="method" value="EM"/>
    <property type="resolution" value="2.89 A"/>
    <property type="chains" value="C=1-81"/>
</dbReference>
<dbReference type="PDB" id="6IJO">
    <property type="method" value="EM"/>
    <property type="resolution" value="3.30 A"/>
    <property type="chains" value="C=1-81"/>
</dbReference>
<dbReference type="PDB" id="6JO5">
    <property type="method" value="EM"/>
    <property type="resolution" value="2.90 A"/>
    <property type="chains" value="C=1-81"/>
</dbReference>
<dbReference type="PDB" id="6JO6">
    <property type="method" value="EM"/>
    <property type="resolution" value="2.90 A"/>
    <property type="chains" value="C=1-81"/>
</dbReference>
<dbReference type="PDB" id="7BGI">
    <property type="method" value="EM"/>
    <property type="resolution" value="2.54 A"/>
    <property type="chains" value="C=2-81"/>
</dbReference>
<dbReference type="PDB" id="7BLX">
    <property type="method" value="EM"/>
    <property type="resolution" value="3.15 A"/>
    <property type="chains" value="C=2-81"/>
</dbReference>
<dbReference type="PDB" id="7D0J">
    <property type="method" value="EM"/>
    <property type="resolution" value="3.42 A"/>
    <property type="chains" value="C=2-81"/>
</dbReference>
<dbReference type="PDB" id="7DZ7">
    <property type="method" value="EM"/>
    <property type="resolution" value="2.84 A"/>
    <property type="chains" value="C=1-81"/>
</dbReference>
<dbReference type="PDB" id="7DZ8">
    <property type="method" value="EM"/>
    <property type="resolution" value="3.16 A"/>
    <property type="chains" value="C=1-81"/>
</dbReference>
<dbReference type="PDB" id="7O01">
    <property type="method" value="EM"/>
    <property type="resolution" value="17.10 A"/>
    <property type="chains" value="C/c=2-81"/>
</dbReference>
<dbReference type="PDB" id="7R3K">
    <property type="method" value="EM"/>
    <property type="resolution" value="2.52 A"/>
    <property type="chains" value="C=1-81"/>
</dbReference>
<dbReference type="PDB" id="7WYI">
    <property type="method" value="EM"/>
    <property type="resolution" value="3.90 A"/>
    <property type="chains" value="C=1-81"/>
</dbReference>
<dbReference type="PDB" id="7WZN">
    <property type="method" value="EM"/>
    <property type="resolution" value="4.90 A"/>
    <property type="chains" value="C=1-81"/>
</dbReference>
<dbReference type="PDB" id="7ZQ9">
    <property type="method" value="EM"/>
    <property type="resolution" value="2.74 A"/>
    <property type="chains" value="C=1-81"/>
</dbReference>
<dbReference type="PDB" id="7ZQC">
    <property type="method" value="EM"/>
    <property type="resolution" value="2.31 A"/>
    <property type="chains" value="C=1-81"/>
</dbReference>
<dbReference type="PDB" id="7ZQD">
    <property type="method" value="EM"/>
    <property type="resolution" value="2.97 A"/>
    <property type="chains" value="C/C2=1-81"/>
</dbReference>
<dbReference type="PDB" id="8H2U">
    <property type="method" value="X-ray"/>
    <property type="resolution" value="3.40 A"/>
    <property type="chains" value="C=1-81"/>
</dbReference>
<dbReference type="PDBsum" id="6IJJ"/>
<dbReference type="PDBsum" id="6IJO"/>
<dbReference type="PDBsum" id="6JO5"/>
<dbReference type="PDBsum" id="6JO6"/>
<dbReference type="PDBsum" id="7BGI"/>
<dbReference type="PDBsum" id="7BLX"/>
<dbReference type="PDBsum" id="7D0J"/>
<dbReference type="PDBsum" id="7DZ7"/>
<dbReference type="PDBsum" id="7DZ8"/>
<dbReference type="PDBsum" id="7O01"/>
<dbReference type="PDBsum" id="7R3K"/>
<dbReference type="PDBsum" id="7WYI"/>
<dbReference type="PDBsum" id="7WZN"/>
<dbReference type="PDBsum" id="7ZQ9"/>
<dbReference type="PDBsum" id="7ZQC"/>
<dbReference type="PDBsum" id="7ZQD"/>
<dbReference type="PDBsum" id="8H2U"/>
<dbReference type="EMDB" id="EMD-12180"/>
<dbReference type="EMDB" id="EMD-12227"/>
<dbReference type="EMDB" id="EMD-12672"/>
<dbReference type="EMDB" id="EMD-14248"/>
<dbReference type="EMDB" id="EMD-14867"/>
<dbReference type="EMDB" id="EMD-14870"/>
<dbReference type="EMDB" id="EMD-14871"/>
<dbReference type="EMDB" id="EMD-30536"/>
<dbReference type="EMDB" id="EMD-30925"/>
<dbReference type="EMDB" id="EMD-30926"/>
<dbReference type="EMDB" id="EMD-32892"/>
<dbReference type="EMDB" id="EMD-32907"/>
<dbReference type="EMDB" id="EMD-9678"/>
<dbReference type="EMDB" id="EMD-9680"/>
<dbReference type="EMDB" id="EMD-9853"/>
<dbReference type="EMDB" id="EMD-9854"/>
<dbReference type="SMR" id="Q00914"/>
<dbReference type="FunCoup" id="Q00914">
    <property type="interactions" value="160"/>
</dbReference>
<dbReference type="IntAct" id="Q00914">
    <property type="interactions" value="6"/>
</dbReference>
<dbReference type="STRING" id="3055.Q00914"/>
<dbReference type="PaxDb" id="3055-DAA00967"/>
<dbReference type="GeneID" id="2717046"/>
<dbReference type="KEGG" id="cre:ChreCp067"/>
<dbReference type="eggNOG" id="ENOG502S26M">
    <property type="taxonomic scope" value="Eukaryota"/>
</dbReference>
<dbReference type="HOGENOM" id="CLU_139698_8_0_1"/>
<dbReference type="InParanoid" id="Q00914"/>
<dbReference type="BioCyc" id="CHLAMY:CHRECP067-MONOMER"/>
<dbReference type="BioCyc" id="MetaCyc:CHRECP067-MONOMER"/>
<dbReference type="BRENDA" id="1.97.1.12">
    <property type="organism ID" value="1318"/>
</dbReference>
<dbReference type="Proteomes" id="UP000006906">
    <property type="component" value="Chloroplast"/>
</dbReference>
<dbReference type="GO" id="GO:0009535">
    <property type="term" value="C:chloroplast thylakoid membrane"/>
    <property type="evidence" value="ECO:0007669"/>
    <property type="project" value="UniProtKB-SubCell"/>
</dbReference>
<dbReference type="GO" id="GO:0009522">
    <property type="term" value="C:photosystem I"/>
    <property type="evidence" value="ECO:0007669"/>
    <property type="project" value="UniProtKB-KW"/>
</dbReference>
<dbReference type="GO" id="GO:0051539">
    <property type="term" value="F:4 iron, 4 sulfur cluster binding"/>
    <property type="evidence" value="ECO:0007669"/>
    <property type="project" value="UniProtKB-KW"/>
</dbReference>
<dbReference type="GO" id="GO:0009055">
    <property type="term" value="F:electron transfer activity"/>
    <property type="evidence" value="ECO:0007669"/>
    <property type="project" value="UniProtKB-UniRule"/>
</dbReference>
<dbReference type="GO" id="GO:0046872">
    <property type="term" value="F:metal ion binding"/>
    <property type="evidence" value="ECO:0007669"/>
    <property type="project" value="UniProtKB-KW"/>
</dbReference>
<dbReference type="GO" id="GO:0016491">
    <property type="term" value="F:oxidoreductase activity"/>
    <property type="evidence" value="ECO:0007669"/>
    <property type="project" value="UniProtKB-KW"/>
</dbReference>
<dbReference type="GO" id="GO:0015979">
    <property type="term" value="P:photosynthesis"/>
    <property type="evidence" value="ECO:0000318"/>
    <property type="project" value="GO_Central"/>
</dbReference>
<dbReference type="GO" id="GO:0009773">
    <property type="term" value="P:photosynthetic electron transport in photosystem I"/>
    <property type="evidence" value="ECO:0007669"/>
    <property type="project" value="InterPro"/>
</dbReference>
<dbReference type="FunFam" id="3.30.70.20:FF:000001">
    <property type="entry name" value="Photosystem I iron-sulfur center"/>
    <property type="match status" value="1"/>
</dbReference>
<dbReference type="Gene3D" id="3.30.70.20">
    <property type="match status" value="1"/>
</dbReference>
<dbReference type="HAMAP" id="MF_01303">
    <property type="entry name" value="PSI_PsaC"/>
    <property type="match status" value="1"/>
</dbReference>
<dbReference type="InterPro" id="IPR017896">
    <property type="entry name" value="4Fe4S_Fe-S-bd"/>
</dbReference>
<dbReference type="InterPro" id="IPR017900">
    <property type="entry name" value="4Fe4S_Fe_S_CS"/>
</dbReference>
<dbReference type="InterPro" id="IPR050157">
    <property type="entry name" value="PSI_iron-sulfur_center"/>
</dbReference>
<dbReference type="InterPro" id="IPR017491">
    <property type="entry name" value="PSI_PsaC"/>
</dbReference>
<dbReference type="NCBIfam" id="TIGR03048">
    <property type="entry name" value="PS_I_psaC"/>
    <property type="match status" value="1"/>
</dbReference>
<dbReference type="PANTHER" id="PTHR24960:SF79">
    <property type="entry name" value="PHOTOSYSTEM I IRON-SULFUR CENTER"/>
    <property type="match status" value="1"/>
</dbReference>
<dbReference type="PANTHER" id="PTHR24960">
    <property type="entry name" value="PHOTOSYSTEM I IRON-SULFUR CENTER-RELATED"/>
    <property type="match status" value="1"/>
</dbReference>
<dbReference type="Pfam" id="PF12838">
    <property type="entry name" value="Fer4_7"/>
    <property type="match status" value="1"/>
</dbReference>
<dbReference type="SUPFAM" id="SSF54862">
    <property type="entry name" value="4Fe-4S ferredoxins"/>
    <property type="match status" value="1"/>
</dbReference>
<dbReference type="PROSITE" id="PS00198">
    <property type="entry name" value="4FE4S_FER_1"/>
    <property type="match status" value="2"/>
</dbReference>
<dbReference type="PROSITE" id="PS51379">
    <property type="entry name" value="4FE4S_FER_2"/>
    <property type="match status" value="2"/>
</dbReference>
<evidence type="ECO:0000250" key="1"/>
<evidence type="ECO:0000255" key="2">
    <source>
        <dbReference type="HAMAP-Rule" id="MF_01303"/>
    </source>
</evidence>
<evidence type="ECO:0000269" key="3">
    <source>
    </source>
</evidence>
<evidence type="ECO:0000269" key="4">
    <source>
    </source>
</evidence>
<evidence type="ECO:0000269" key="5">
    <source>
    </source>
</evidence>
<evidence type="ECO:0000269" key="6">
    <source>
    </source>
</evidence>
<evidence type="ECO:0007829" key="7">
    <source>
        <dbReference type="PDB" id="7BLX"/>
    </source>
</evidence>
<evidence type="ECO:0007829" key="8">
    <source>
        <dbReference type="PDB" id="7R3K"/>
    </source>
</evidence>
<name>PSAC_CHLRE</name>
<proteinExistence type="evidence at protein level"/>
<comment type="function">
    <text evidence="2 4">Apoprotein for the two 4Fe-4S centers FA and FB of photosystem I (PSI); essential for photochemical activity. FB is the terminal electron acceptor of PSI, donating electrons to ferredoxin. The C-terminus interacts with PsaA/B/D and helps assemble the protein into the PSI complex. Required for binding of PsaD and PsaE to PSI. PSI is a plastocyanin/cytochrome c6-ferredoxin oxidoreductase, converting photonic excitation into a charge separation, which transfers an electron from the donor P700 chlorophyll pair to the spectroscopically characterized acceptors A0, A1, FX, FA and FB in turn.</text>
</comment>
<comment type="catalytic activity">
    <reaction evidence="2">
        <text>reduced [plastocyanin] + hnu + oxidized [2Fe-2S]-[ferredoxin] = oxidized [plastocyanin] + reduced [2Fe-2S]-[ferredoxin]</text>
        <dbReference type="Rhea" id="RHEA:30407"/>
        <dbReference type="Rhea" id="RHEA-COMP:10000"/>
        <dbReference type="Rhea" id="RHEA-COMP:10001"/>
        <dbReference type="Rhea" id="RHEA-COMP:10039"/>
        <dbReference type="Rhea" id="RHEA-COMP:10040"/>
        <dbReference type="ChEBI" id="CHEBI:29036"/>
        <dbReference type="ChEBI" id="CHEBI:30212"/>
        <dbReference type="ChEBI" id="CHEBI:33737"/>
        <dbReference type="ChEBI" id="CHEBI:33738"/>
        <dbReference type="ChEBI" id="CHEBI:49552"/>
        <dbReference type="EC" id="1.97.1.12"/>
    </reaction>
</comment>
<comment type="cofactor">
    <cofactor>
        <name>[4Fe-4S] cluster</name>
        <dbReference type="ChEBI" id="CHEBI:49883"/>
    </cofactor>
    <text>Binds 2 [4Fe-4S] clusters. Cluster 2 is most probably the spectroscopically characterized electron acceptor FA and cluster 1 is most probably FB.</text>
</comment>
<comment type="subunit">
    <text evidence="2">The eukaryotic PSI reaction center is composed of at least 11 subunits.</text>
</comment>
<comment type="subcellular location">
    <subcellularLocation>
        <location evidence="2">Plastid</location>
        <location evidence="2">Chloroplast thylakoid membrane</location>
        <topology evidence="2">Peripheral membrane protein</topology>
        <orientation evidence="2">Stromal side</orientation>
    </subcellularLocation>
</comment>
<gene>
    <name evidence="2" type="primary">psaC</name>
</gene>
<reference key="1">
    <citation type="journal article" date="1991" name="EMBO J.">
        <title>Directed chloroplast transformation in Chlamydomonas reinhardtii: insertional inactivation of the psaC gene encoding the iron sulfur protein destabilizes photosystem I.</title>
        <authorList>
            <person name="Takahashi Y."/>
            <person name="Goldschmidt-Clermont M."/>
            <person name="Soen S.-Y."/>
            <person name="Franzen L.-G."/>
            <person name="Rochaix J.-D."/>
        </authorList>
    </citation>
    <scope>NUCLEOTIDE SEQUENCE [GENOMIC DNA]</scope>
    <scope>FUNCTION</scope>
    <source>
        <strain>137c / CC-125</strain>
    </source>
</reference>
<reference key="2">
    <citation type="journal article" date="1996" name="EMBO J.">
        <title>The chloroplast ycf7 (petL) open reading frame of Chlamydomonas reinhardtii encodes a small functionally important subunit of the cytochrome b6f complex.</title>
        <authorList>
            <person name="Takahashi Y."/>
            <person name="Rahire M."/>
            <person name="Breyton C."/>
            <person name="Popot J.-L."/>
            <person name="Joliot P."/>
            <person name="Rochaix J.-D."/>
        </authorList>
    </citation>
    <scope>NUCLEOTIDE SEQUENCE [GENOMIC DNA]</scope>
</reference>
<reference key="3">
    <citation type="journal article" date="2009" name="BMC Evol. Biol.">
        <title>Nucleotide diversity of the Chlamydomonas reinhardtii plastid genome: addressing the mutational-hazard hypothesis.</title>
        <authorList>
            <person name="Smith D.R."/>
            <person name="Lee R.W."/>
        </authorList>
    </citation>
    <scope>NUCLEOTIDE SEQUENCE [LARGE SCALE GENOMIC DNA]</scope>
    <source>
        <strain>CC-503</strain>
    </source>
</reference>
<reference key="4">
    <citation type="journal article" date="2002" name="Plant Cell">
        <title>The Chlamydomonas reinhardtii plastid chromosome: islands of genes in a sea of repeats.</title>
        <authorList>
            <person name="Maul J.E."/>
            <person name="Lilly J.W."/>
            <person name="Cui L."/>
            <person name="dePamphilis C.W."/>
            <person name="Miller W."/>
            <person name="Harris E.H."/>
            <person name="Stern D.B."/>
        </authorList>
    </citation>
    <scope>IDENTIFICATION</scope>
    <scope>COMPLETE PLASTID GENOME</scope>
</reference>
<reference key="5">
    <citation type="journal article" date="1997" name="Biochemistry">
        <title>Targeted mutations in the psaC gene of Chlamydomonas reinhardtii: preferential reduction of FB at low temperature is not accompanied by altered electron flow from photosystem I to ferredoxin.</title>
        <authorList>
            <person name="Fischer N."/>
            <person name="Setif P."/>
            <person name="Rochaix J.-D."/>
        </authorList>
    </citation>
    <scope>MUTAGENESIS OF 52-LYS-ARG-53</scope>
</reference>
<reference key="6">
    <citation type="journal article" date="1998" name="EMBO J.">
        <title>The PsaC subunit of photosystem I provides an essential lysine residue for fast electron transfer to ferredoxin.</title>
        <authorList>
            <person name="Fischer N."/>
            <person name="Hippler M."/>
            <person name="Setif P."/>
            <person name="Jacquot J.-P."/>
            <person name="Rochaix J.-D."/>
        </authorList>
    </citation>
    <scope>MUTAGENESIS OF LYS-35</scope>
    <scope>CROSS-LINKING TO FERREDOXIN</scope>
</reference>
<reference key="7">
    <citation type="journal article" date="1999" name="J. Biol. Chem.">
        <title>Site-directed mutagenesis of the PsaC subunit of photosystem I. F(b) is the cluster interacting with soluble ferredoxin.</title>
        <authorList>
            <person name="Fischer N."/>
            <person name="Setif P."/>
            <person name="Rochaix J.-D."/>
        </authorList>
    </citation>
    <scope>MUTAGENESIS OF ASP-9; ILE-12; 15-THR-GLN-16; GLU-46; VAL-49 AND 52-LYS-ARG-53</scope>
    <source>
        <strain>137c / CC-125</strain>
    </source>
</reference>
<organism>
    <name type="scientific">Chlamydomonas reinhardtii</name>
    <name type="common">Chlamydomonas smithii</name>
    <dbReference type="NCBI Taxonomy" id="3055"/>
    <lineage>
        <taxon>Eukaryota</taxon>
        <taxon>Viridiplantae</taxon>
        <taxon>Chlorophyta</taxon>
        <taxon>core chlorophytes</taxon>
        <taxon>Chlorophyceae</taxon>
        <taxon>CS clade</taxon>
        <taxon>Chlamydomonadales</taxon>
        <taxon>Chlamydomonadaceae</taxon>
        <taxon>Chlamydomonas</taxon>
    </lineage>
</organism>
<geneLocation type="chloroplast"/>